<sequence length="173" mass="19359">MDAAKVRSEFDEKMMRYALELADKAEALGEIPVGAVLVDDARNIIGEGWNLSIVQSDPTAHAEIIALRNGAKNIQNYRLLNSTLYVTLEPCTMCAGAILHSRIKRLVFGASDYKTGAIGSRFHFFDDYKMNHTLEVTSGVLAEECSQKLSTFFQKRREEKKIEKALLKSLSDK</sequence>
<proteinExistence type="inferred from homology"/>
<organism>
    <name type="scientific">Haemophilus influenzae (strain ATCC 51907 / DSM 11121 / KW20 / Rd)</name>
    <dbReference type="NCBI Taxonomy" id="71421"/>
    <lineage>
        <taxon>Bacteria</taxon>
        <taxon>Pseudomonadati</taxon>
        <taxon>Pseudomonadota</taxon>
        <taxon>Gammaproteobacteria</taxon>
        <taxon>Pasteurellales</taxon>
        <taxon>Pasteurellaceae</taxon>
        <taxon>Haemophilus</taxon>
    </lineage>
</organism>
<protein>
    <recommendedName>
        <fullName evidence="1">tRNA-specific adenosine deaminase</fullName>
        <ecNumber evidence="1">3.5.4.33</ecNumber>
    </recommendedName>
</protein>
<keyword id="KW-0378">Hydrolase</keyword>
<keyword id="KW-0479">Metal-binding</keyword>
<keyword id="KW-1185">Reference proteome</keyword>
<keyword id="KW-0819">tRNA processing</keyword>
<keyword id="KW-0862">Zinc</keyword>
<evidence type="ECO:0000255" key="1">
    <source>
        <dbReference type="HAMAP-Rule" id="MF_00972"/>
    </source>
</evidence>
<evidence type="ECO:0000255" key="2">
    <source>
        <dbReference type="PROSITE-ProRule" id="PRU01083"/>
    </source>
</evidence>
<name>TADA_HAEIN</name>
<gene>
    <name evidence="1" type="primary">tadA</name>
    <name type="ordered locus">HI_0906</name>
</gene>
<feature type="chain" id="PRO_0000171739" description="tRNA-specific adenosine deaminase">
    <location>
        <begin position="1"/>
        <end position="173"/>
    </location>
</feature>
<feature type="domain" description="CMP/dCMP-type deaminase" evidence="2">
    <location>
        <begin position="9"/>
        <end position="121"/>
    </location>
</feature>
<feature type="active site" description="Proton donor" evidence="1">
    <location>
        <position position="63"/>
    </location>
</feature>
<feature type="binding site" evidence="1">
    <location>
        <position position="61"/>
    </location>
    <ligand>
        <name>Zn(2+)</name>
        <dbReference type="ChEBI" id="CHEBI:29105"/>
        <note>catalytic</note>
    </ligand>
</feature>
<feature type="binding site" evidence="1">
    <location>
        <position position="91"/>
    </location>
    <ligand>
        <name>Zn(2+)</name>
        <dbReference type="ChEBI" id="CHEBI:29105"/>
        <note>catalytic</note>
    </ligand>
</feature>
<feature type="binding site" evidence="1">
    <location>
        <position position="94"/>
    </location>
    <ligand>
        <name>Zn(2+)</name>
        <dbReference type="ChEBI" id="CHEBI:29105"/>
        <note>catalytic</note>
    </ligand>
</feature>
<comment type="function">
    <text evidence="1">Catalyzes the deamination of adenosine to inosine at the wobble position 34 of tRNA(Arg2).</text>
</comment>
<comment type="catalytic activity">
    <reaction evidence="1">
        <text>adenosine(34) in tRNA + H2O + H(+) = inosine(34) in tRNA + NH4(+)</text>
        <dbReference type="Rhea" id="RHEA:43168"/>
        <dbReference type="Rhea" id="RHEA-COMP:10373"/>
        <dbReference type="Rhea" id="RHEA-COMP:10374"/>
        <dbReference type="ChEBI" id="CHEBI:15377"/>
        <dbReference type="ChEBI" id="CHEBI:15378"/>
        <dbReference type="ChEBI" id="CHEBI:28938"/>
        <dbReference type="ChEBI" id="CHEBI:74411"/>
        <dbReference type="ChEBI" id="CHEBI:82852"/>
        <dbReference type="EC" id="3.5.4.33"/>
    </reaction>
</comment>
<comment type="cofactor">
    <cofactor evidence="1">
        <name>Zn(2+)</name>
        <dbReference type="ChEBI" id="CHEBI:29105"/>
    </cofactor>
    <text evidence="1">Binds 1 zinc ion per subunit.</text>
</comment>
<comment type="subunit">
    <text evidence="1">Homodimer.</text>
</comment>
<comment type="similarity">
    <text evidence="1">Belongs to the cytidine and deoxycytidylate deaminase family.</text>
</comment>
<dbReference type="EC" id="3.5.4.33" evidence="1"/>
<dbReference type="EMBL" id="L42023">
    <property type="protein sequence ID" value="AAC22565.1"/>
    <property type="molecule type" value="Genomic_DNA"/>
</dbReference>
<dbReference type="PIR" id="C64161">
    <property type="entry name" value="C64161"/>
</dbReference>
<dbReference type="RefSeq" id="NP_439066.1">
    <property type="nucleotide sequence ID" value="NC_000907.1"/>
</dbReference>
<dbReference type="SMR" id="P44931"/>
<dbReference type="STRING" id="71421.HI_0906"/>
<dbReference type="EnsemblBacteria" id="AAC22565">
    <property type="protein sequence ID" value="AAC22565"/>
    <property type="gene ID" value="HI_0906"/>
</dbReference>
<dbReference type="KEGG" id="hin:HI_0906"/>
<dbReference type="PATRIC" id="fig|71421.8.peg.947"/>
<dbReference type="eggNOG" id="COG0590">
    <property type="taxonomic scope" value="Bacteria"/>
</dbReference>
<dbReference type="HOGENOM" id="CLU_025810_3_0_6"/>
<dbReference type="OrthoDB" id="9802676at2"/>
<dbReference type="PhylomeDB" id="P44931"/>
<dbReference type="BioCyc" id="HINF71421:G1GJ1-945-MONOMER"/>
<dbReference type="Proteomes" id="UP000000579">
    <property type="component" value="Chromosome"/>
</dbReference>
<dbReference type="GO" id="GO:0052717">
    <property type="term" value="F:tRNA-specific adenosine-34 deaminase activity"/>
    <property type="evidence" value="ECO:0000318"/>
    <property type="project" value="GO_Central"/>
</dbReference>
<dbReference type="GO" id="GO:0008270">
    <property type="term" value="F:zinc ion binding"/>
    <property type="evidence" value="ECO:0007669"/>
    <property type="project" value="UniProtKB-UniRule"/>
</dbReference>
<dbReference type="GO" id="GO:0002100">
    <property type="term" value="P:tRNA wobble adenosine to inosine editing"/>
    <property type="evidence" value="ECO:0000318"/>
    <property type="project" value="GO_Central"/>
</dbReference>
<dbReference type="CDD" id="cd01285">
    <property type="entry name" value="nucleoside_deaminase"/>
    <property type="match status" value="1"/>
</dbReference>
<dbReference type="FunFam" id="3.40.140.10:FF:000005">
    <property type="entry name" value="tRNA-specific adenosine deaminase"/>
    <property type="match status" value="1"/>
</dbReference>
<dbReference type="Gene3D" id="3.40.140.10">
    <property type="entry name" value="Cytidine Deaminase, domain 2"/>
    <property type="match status" value="1"/>
</dbReference>
<dbReference type="HAMAP" id="MF_00972">
    <property type="entry name" value="tRNA_aden_deaminase"/>
    <property type="match status" value="1"/>
</dbReference>
<dbReference type="InterPro" id="IPR016192">
    <property type="entry name" value="APOBEC/CMP_deaminase_Zn-bd"/>
</dbReference>
<dbReference type="InterPro" id="IPR002125">
    <property type="entry name" value="CMP_dCMP_dom"/>
</dbReference>
<dbReference type="InterPro" id="IPR016193">
    <property type="entry name" value="Cytidine_deaminase-like"/>
</dbReference>
<dbReference type="InterPro" id="IPR028883">
    <property type="entry name" value="tRNA_aden_deaminase"/>
</dbReference>
<dbReference type="NCBIfam" id="NF008113">
    <property type="entry name" value="PRK10860.1"/>
    <property type="match status" value="1"/>
</dbReference>
<dbReference type="PANTHER" id="PTHR11079">
    <property type="entry name" value="CYTOSINE DEAMINASE FAMILY MEMBER"/>
    <property type="match status" value="1"/>
</dbReference>
<dbReference type="PANTHER" id="PTHR11079:SF202">
    <property type="entry name" value="TRNA-SPECIFIC ADENOSINE DEAMINASE"/>
    <property type="match status" value="1"/>
</dbReference>
<dbReference type="Pfam" id="PF14437">
    <property type="entry name" value="MafB19-deam"/>
    <property type="match status" value="1"/>
</dbReference>
<dbReference type="SUPFAM" id="SSF53927">
    <property type="entry name" value="Cytidine deaminase-like"/>
    <property type="match status" value="1"/>
</dbReference>
<dbReference type="PROSITE" id="PS00903">
    <property type="entry name" value="CYT_DCMP_DEAMINASES_1"/>
    <property type="match status" value="1"/>
</dbReference>
<dbReference type="PROSITE" id="PS51747">
    <property type="entry name" value="CYT_DCMP_DEAMINASES_2"/>
    <property type="match status" value="1"/>
</dbReference>
<accession>P44931</accession>
<reference key="1">
    <citation type="journal article" date="1995" name="Science">
        <title>Whole-genome random sequencing and assembly of Haemophilus influenzae Rd.</title>
        <authorList>
            <person name="Fleischmann R.D."/>
            <person name="Adams M.D."/>
            <person name="White O."/>
            <person name="Clayton R.A."/>
            <person name="Kirkness E.F."/>
            <person name="Kerlavage A.R."/>
            <person name="Bult C.J."/>
            <person name="Tomb J.-F."/>
            <person name="Dougherty B.A."/>
            <person name="Merrick J.M."/>
            <person name="McKenney K."/>
            <person name="Sutton G.G."/>
            <person name="FitzHugh W."/>
            <person name="Fields C.A."/>
            <person name="Gocayne J.D."/>
            <person name="Scott J.D."/>
            <person name="Shirley R."/>
            <person name="Liu L.-I."/>
            <person name="Glodek A."/>
            <person name="Kelley J.M."/>
            <person name="Weidman J.F."/>
            <person name="Phillips C.A."/>
            <person name="Spriggs T."/>
            <person name="Hedblom E."/>
            <person name="Cotton M.D."/>
            <person name="Utterback T.R."/>
            <person name="Hanna M.C."/>
            <person name="Nguyen D.T."/>
            <person name="Saudek D.M."/>
            <person name="Brandon R.C."/>
            <person name="Fine L.D."/>
            <person name="Fritchman J.L."/>
            <person name="Fuhrmann J.L."/>
            <person name="Geoghagen N.S.M."/>
            <person name="Gnehm C.L."/>
            <person name="McDonald L.A."/>
            <person name="Small K.V."/>
            <person name="Fraser C.M."/>
            <person name="Smith H.O."/>
            <person name="Venter J.C."/>
        </authorList>
    </citation>
    <scope>NUCLEOTIDE SEQUENCE [LARGE SCALE GENOMIC DNA]</scope>
    <source>
        <strain>ATCC 51907 / DSM 11121 / KW20 / Rd</strain>
    </source>
</reference>